<dbReference type="EC" id="1.11.1.21" evidence="1"/>
<dbReference type="EMBL" id="CP000812">
    <property type="protein sequence ID" value="ABV33771.1"/>
    <property type="molecule type" value="Genomic_DNA"/>
</dbReference>
<dbReference type="RefSeq" id="WP_012003252.1">
    <property type="nucleotide sequence ID" value="NC_009828.1"/>
</dbReference>
<dbReference type="SMR" id="A8F6I7"/>
<dbReference type="STRING" id="416591.Tlet_1209"/>
<dbReference type="KEGG" id="tle:Tlet_1209"/>
<dbReference type="eggNOG" id="COG0376">
    <property type="taxonomic scope" value="Bacteria"/>
</dbReference>
<dbReference type="HOGENOM" id="CLU_025424_2_0_0"/>
<dbReference type="OrthoDB" id="9759743at2"/>
<dbReference type="Proteomes" id="UP000002016">
    <property type="component" value="Chromosome"/>
</dbReference>
<dbReference type="GO" id="GO:0005829">
    <property type="term" value="C:cytosol"/>
    <property type="evidence" value="ECO:0007669"/>
    <property type="project" value="TreeGrafter"/>
</dbReference>
<dbReference type="GO" id="GO:0004096">
    <property type="term" value="F:catalase activity"/>
    <property type="evidence" value="ECO:0007669"/>
    <property type="project" value="UniProtKB-UniRule"/>
</dbReference>
<dbReference type="GO" id="GO:0020037">
    <property type="term" value="F:heme binding"/>
    <property type="evidence" value="ECO:0007669"/>
    <property type="project" value="InterPro"/>
</dbReference>
<dbReference type="GO" id="GO:0046872">
    <property type="term" value="F:metal ion binding"/>
    <property type="evidence" value="ECO:0007669"/>
    <property type="project" value="UniProtKB-KW"/>
</dbReference>
<dbReference type="GO" id="GO:0070301">
    <property type="term" value="P:cellular response to hydrogen peroxide"/>
    <property type="evidence" value="ECO:0007669"/>
    <property type="project" value="TreeGrafter"/>
</dbReference>
<dbReference type="GO" id="GO:0042744">
    <property type="term" value="P:hydrogen peroxide catabolic process"/>
    <property type="evidence" value="ECO:0007669"/>
    <property type="project" value="UniProtKB-KW"/>
</dbReference>
<dbReference type="CDD" id="cd00649">
    <property type="entry name" value="catalase_peroxidase_1"/>
    <property type="match status" value="1"/>
</dbReference>
<dbReference type="CDD" id="cd08200">
    <property type="entry name" value="catalase_peroxidase_2"/>
    <property type="match status" value="1"/>
</dbReference>
<dbReference type="Gene3D" id="1.10.520.10">
    <property type="match status" value="2"/>
</dbReference>
<dbReference type="Gene3D" id="1.10.420.10">
    <property type="entry name" value="Peroxidase, domain 2"/>
    <property type="match status" value="2"/>
</dbReference>
<dbReference type="HAMAP" id="MF_01961">
    <property type="entry name" value="Catal_peroxid"/>
    <property type="match status" value="1"/>
</dbReference>
<dbReference type="InterPro" id="IPR000763">
    <property type="entry name" value="Catalase_peroxidase"/>
</dbReference>
<dbReference type="InterPro" id="IPR002016">
    <property type="entry name" value="Haem_peroxidase"/>
</dbReference>
<dbReference type="InterPro" id="IPR010255">
    <property type="entry name" value="Haem_peroxidase_sf"/>
</dbReference>
<dbReference type="InterPro" id="IPR019794">
    <property type="entry name" value="Peroxidases_AS"/>
</dbReference>
<dbReference type="InterPro" id="IPR019793">
    <property type="entry name" value="Peroxidases_heam-ligand_BS"/>
</dbReference>
<dbReference type="NCBIfam" id="TIGR00198">
    <property type="entry name" value="cat_per_HPI"/>
    <property type="match status" value="1"/>
</dbReference>
<dbReference type="NCBIfam" id="NF011635">
    <property type="entry name" value="PRK15061.1"/>
    <property type="match status" value="1"/>
</dbReference>
<dbReference type="PANTHER" id="PTHR30555:SF0">
    <property type="entry name" value="CATALASE-PEROXIDASE"/>
    <property type="match status" value="1"/>
</dbReference>
<dbReference type="PANTHER" id="PTHR30555">
    <property type="entry name" value="HYDROPEROXIDASE I, BIFUNCTIONAL CATALASE-PEROXIDASE"/>
    <property type="match status" value="1"/>
</dbReference>
<dbReference type="Pfam" id="PF00141">
    <property type="entry name" value="peroxidase"/>
    <property type="match status" value="2"/>
</dbReference>
<dbReference type="PRINTS" id="PR00460">
    <property type="entry name" value="BPEROXIDASE"/>
</dbReference>
<dbReference type="PRINTS" id="PR00458">
    <property type="entry name" value="PEROXIDASE"/>
</dbReference>
<dbReference type="SUPFAM" id="SSF48113">
    <property type="entry name" value="Heme-dependent peroxidases"/>
    <property type="match status" value="2"/>
</dbReference>
<dbReference type="PROSITE" id="PS00435">
    <property type="entry name" value="PEROXIDASE_1"/>
    <property type="match status" value="1"/>
</dbReference>
<dbReference type="PROSITE" id="PS00436">
    <property type="entry name" value="PEROXIDASE_2"/>
    <property type="match status" value="1"/>
</dbReference>
<dbReference type="PROSITE" id="PS50873">
    <property type="entry name" value="PEROXIDASE_4"/>
    <property type="match status" value="1"/>
</dbReference>
<name>KATG_PSELT</name>
<sequence length="726" mass="83440">MKSKERKSRKRWITDWWPNRLNLKILRQNCSDSNPYGSDYDYLKEVKTLDVDAVIEDLKKLMKTSQDWWPADFGHYGPLFIRLSWHSAGSYRIHDGRGGAKNGSIRFPARINWPDNINLDKAIRLLWPIKKKYGKKLSWADLIILAGTVALQDMGVKILGFSLGREDVFEADESPDWGAEQEMLSGKERFKEGELEKPFAATEMGLIYVNPEGPMGNPDPSGSAKEIRLAFTRMGMNDEETVALIAGGHSFGKCHGAGPSKDLGPDPSSSPIEQMGLGWKYTYKTGKASDTYTSGFEVIWSSKPTKFGIQYLKFLLEFEWELEKSPDGKNQWVAKNAPEMIPDPFDPNKKHKPRMLTADLALKFDPIYSKIAKKFLENPEEFEKAFAWAWFKLTHRDMGPKSCYIGPYVPREEFIWQDPLPKRDYELIDEEDIEYLKKQILNSGINISQLVYTAWSSASTYRDSDRRGGANGARIRLRPMNLWEVNHPDDLIKIIKVYEKIQKNFNEEQKNNKKVSIADLIVLGGCAAIESAAKKAGFDIRVPFIPGRVDALQDQVEEEFYREIEPFADGFRNYFKDPYKIDESDISTTPEYFLIDKAQLLKLTVPELVVIVGGLRVLGAVYSYKNYGVLTHTVGTLTNDFFVNLLDMNIEWKQIDEHRYLFEGFNRKTKEPEFKATRVDLIFAHHDELRAVAEVYASDDEKEKFVSDFIKTWDKVMTLDRFDLKV</sequence>
<keyword id="KW-0349">Heme</keyword>
<keyword id="KW-0376">Hydrogen peroxide</keyword>
<keyword id="KW-0408">Iron</keyword>
<keyword id="KW-0479">Metal-binding</keyword>
<keyword id="KW-0560">Oxidoreductase</keyword>
<keyword id="KW-0575">Peroxidase</keyword>
<keyword id="KW-1185">Reference proteome</keyword>
<gene>
    <name evidence="1" type="primary">katG</name>
    <name type="ordered locus">Tlet_1209</name>
</gene>
<protein>
    <recommendedName>
        <fullName evidence="1">Catalase-peroxidase</fullName>
        <shortName evidence="1">CP</shortName>
        <ecNumber evidence="1">1.11.1.21</ecNumber>
    </recommendedName>
    <alternativeName>
        <fullName evidence="1">Peroxidase/catalase</fullName>
    </alternativeName>
</protein>
<organism>
    <name type="scientific">Pseudothermotoga lettingae (strain ATCC BAA-301 / DSM 14385 / NBRC 107922 / TMO)</name>
    <name type="common">Thermotoga lettingae</name>
    <dbReference type="NCBI Taxonomy" id="416591"/>
    <lineage>
        <taxon>Bacteria</taxon>
        <taxon>Thermotogati</taxon>
        <taxon>Thermotogota</taxon>
        <taxon>Thermotogae</taxon>
        <taxon>Thermotogales</taxon>
        <taxon>Thermotogaceae</taxon>
        <taxon>Pseudothermotoga</taxon>
    </lineage>
</organism>
<proteinExistence type="inferred from homology"/>
<comment type="function">
    <text evidence="1">Bifunctional enzyme with both catalase and broad-spectrum peroxidase activity.</text>
</comment>
<comment type="catalytic activity">
    <reaction evidence="1">
        <text>H2O2 + AH2 = A + 2 H2O</text>
        <dbReference type="Rhea" id="RHEA:30275"/>
        <dbReference type="ChEBI" id="CHEBI:13193"/>
        <dbReference type="ChEBI" id="CHEBI:15377"/>
        <dbReference type="ChEBI" id="CHEBI:16240"/>
        <dbReference type="ChEBI" id="CHEBI:17499"/>
        <dbReference type="EC" id="1.11.1.21"/>
    </reaction>
</comment>
<comment type="catalytic activity">
    <reaction evidence="1">
        <text>2 H2O2 = O2 + 2 H2O</text>
        <dbReference type="Rhea" id="RHEA:20309"/>
        <dbReference type="ChEBI" id="CHEBI:15377"/>
        <dbReference type="ChEBI" id="CHEBI:15379"/>
        <dbReference type="ChEBI" id="CHEBI:16240"/>
        <dbReference type="EC" id="1.11.1.21"/>
    </reaction>
</comment>
<comment type="cofactor">
    <cofactor evidence="1">
        <name>heme b</name>
        <dbReference type="ChEBI" id="CHEBI:60344"/>
    </cofactor>
    <text evidence="1">Binds 1 heme b (iron(II)-protoporphyrin IX) group per dimer.</text>
</comment>
<comment type="subunit">
    <text evidence="1">Homodimer or homotetramer.</text>
</comment>
<comment type="PTM">
    <text evidence="1">Formation of the three residue Trp-Tyr-Met cross-link is important for the catalase, but not the peroxidase activity of the enzyme.</text>
</comment>
<comment type="similarity">
    <text evidence="1">Belongs to the peroxidase family. Peroxidase/catalase subfamily.</text>
</comment>
<feature type="chain" id="PRO_0000354946" description="Catalase-peroxidase">
    <location>
        <begin position="1"/>
        <end position="726"/>
    </location>
</feature>
<feature type="active site" description="Proton acceptor" evidence="1">
    <location>
        <position position="86"/>
    </location>
</feature>
<feature type="binding site" description="axial binding residue" evidence="1">
    <location>
        <position position="249"/>
    </location>
    <ligand>
        <name>heme b</name>
        <dbReference type="ChEBI" id="CHEBI:60344"/>
    </ligand>
    <ligandPart>
        <name>Fe</name>
        <dbReference type="ChEBI" id="CHEBI:18248"/>
    </ligandPart>
</feature>
<feature type="site" description="Transition state stabilizer" evidence="1">
    <location>
        <position position="82"/>
    </location>
</feature>
<feature type="cross-link" description="Tryptophyl-tyrosyl-methioninium (Trp-Tyr) (with M-234)" evidence="1">
    <location>
        <begin position="85"/>
        <end position="208"/>
    </location>
</feature>
<feature type="cross-link" description="Tryptophyl-tyrosyl-methioninium (Tyr-Met) (with W-85)" evidence="1">
    <location>
        <begin position="208"/>
        <end position="234"/>
    </location>
</feature>
<accession>A8F6I7</accession>
<evidence type="ECO:0000255" key="1">
    <source>
        <dbReference type="HAMAP-Rule" id="MF_01961"/>
    </source>
</evidence>
<reference key="1">
    <citation type="submission" date="2007-08" db="EMBL/GenBank/DDBJ databases">
        <title>Complete sequence of Thermotoga lettingae TMO.</title>
        <authorList>
            <consortium name="US DOE Joint Genome Institute"/>
            <person name="Copeland A."/>
            <person name="Lucas S."/>
            <person name="Lapidus A."/>
            <person name="Barry K."/>
            <person name="Glavina del Rio T."/>
            <person name="Dalin E."/>
            <person name="Tice H."/>
            <person name="Pitluck S."/>
            <person name="Foster B."/>
            <person name="Bruce D."/>
            <person name="Schmutz J."/>
            <person name="Larimer F."/>
            <person name="Land M."/>
            <person name="Hauser L."/>
            <person name="Kyrpides N."/>
            <person name="Mikhailova N."/>
            <person name="Nelson K."/>
            <person name="Gogarten J.P."/>
            <person name="Noll K."/>
            <person name="Richardson P."/>
        </authorList>
    </citation>
    <scope>NUCLEOTIDE SEQUENCE [LARGE SCALE GENOMIC DNA]</scope>
    <source>
        <strain>ATCC BAA-301 / DSM 14385 / NBRC 107922 / TMO</strain>
    </source>
</reference>